<proteinExistence type="evidence at protein level"/>
<keyword id="KW-0106">Calcium</keyword>
<keyword id="KW-0319">Glycerol metabolism</keyword>
<keyword id="KW-0378">Hydrolase</keyword>
<keyword id="KW-0479">Metal-binding</keyword>
<keyword id="KW-1185">Reference proteome</keyword>
<accession>P9WMU3</accession>
<accession>L0TGR7</accession>
<accession>P96236</accession>
<accession>Q7D4R6</accession>
<reference key="1">
    <citation type="journal article" date="1998" name="Nature">
        <title>Deciphering the biology of Mycobacterium tuberculosis from the complete genome sequence.</title>
        <authorList>
            <person name="Cole S.T."/>
            <person name="Brosch R."/>
            <person name="Parkhill J."/>
            <person name="Garnier T."/>
            <person name="Churcher C.M."/>
            <person name="Harris D.E."/>
            <person name="Gordon S.V."/>
            <person name="Eiglmeier K."/>
            <person name="Gas S."/>
            <person name="Barry C.E. III"/>
            <person name="Tekaia F."/>
            <person name="Badcock K."/>
            <person name="Basham D."/>
            <person name="Brown D."/>
            <person name="Chillingworth T."/>
            <person name="Connor R."/>
            <person name="Davies R.M."/>
            <person name="Devlin K."/>
            <person name="Feltwell T."/>
            <person name="Gentles S."/>
            <person name="Hamlin N."/>
            <person name="Holroyd S."/>
            <person name="Hornsby T."/>
            <person name="Jagels K."/>
            <person name="Krogh A."/>
            <person name="McLean J."/>
            <person name="Moule S."/>
            <person name="Murphy L.D."/>
            <person name="Oliver S."/>
            <person name="Osborne J."/>
            <person name="Quail M.A."/>
            <person name="Rajandream M.A."/>
            <person name="Rogers J."/>
            <person name="Rutter S."/>
            <person name="Seeger K."/>
            <person name="Skelton S."/>
            <person name="Squares S."/>
            <person name="Squares R."/>
            <person name="Sulston J.E."/>
            <person name="Taylor K."/>
            <person name="Whitehead S."/>
            <person name="Barrell B.G."/>
        </authorList>
    </citation>
    <scope>NUCLEOTIDE SEQUENCE [LARGE SCALE GENOMIC DNA]</scope>
    <source>
        <strain>ATCC 25618 / H37Rv</strain>
    </source>
</reference>
<reference key="2">
    <citation type="journal article" date="2001" name="Proc. Natl. Acad. Sci. U.S.A.">
        <title>Regulation of the Mycobacterium tuberculosis hypoxic response gene encoding alpha -crystallin.</title>
        <authorList>
            <person name="Sherman D.R."/>
            <person name="Voskuil M."/>
            <person name="Schnappinger D."/>
            <person name="Liao R."/>
            <person name="Harrell M.I."/>
            <person name="Schoolnik G.K."/>
        </authorList>
    </citation>
    <scope>INDUCTION BY HYPOXIA</scope>
    <source>
        <strain>ATCC 25618 / H37Rv</strain>
    </source>
</reference>
<reference key="3">
    <citation type="journal article" date="2008" name="BMC Syst. Biol.">
        <title>targetTB: a target identification pipeline for Mycobacterium tuberculosis through an interactome, reactome and genome-scale structural analysis.</title>
        <authorList>
            <person name="Raman K."/>
            <person name="Yeturu K."/>
            <person name="Chandra N."/>
        </authorList>
    </citation>
    <scope>IDENTIFICATION AS A DRUG TARGET [LARGE SCALE ANALYSIS]</scope>
</reference>
<reference key="4">
    <citation type="journal article" date="2011" name="Mol. Cell. Proteomics">
        <title>Proteogenomic analysis of Mycobacterium tuberculosis by high resolution mass spectrometry.</title>
        <authorList>
            <person name="Kelkar D.S."/>
            <person name="Kumar D."/>
            <person name="Kumar P."/>
            <person name="Balakrishnan L."/>
            <person name="Muthusamy B."/>
            <person name="Yadav A.K."/>
            <person name="Shrivastava P."/>
            <person name="Marimuthu A."/>
            <person name="Anand S."/>
            <person name="Sundaram H."/>
            <person name="Kingsbury R."/>
            <person name="Harsha H.C."/>
            <person name="Nair B."/>
            <person name="Prasad T.S."/>
            <person name="Chauhan D.S."/>
            <person name="Katoch K."/>
            <person name="Katoch V.M."/>
            <person name="Kumar P."/>
            <person name="Chaerkady R."/>
            <person name="Ramachandran S."/>
            <person name="Dash D."/>
            <person name="Pandey A."/>
        </authorList>
    </citation>
    <scope>IDENTIFICATION BY MASS SPECTROMETRY [LARGE SCALE ANALYSIS]</scope>
    <source>
        <strain>ATCC 25618 / H37Rv</strain>
    </source>
</reference>
<name>GLPQ1_MYCTU</name>
<feature type="chain" id="PRO_0000392941" description="Probable glycerophosphodiester phosphodiesterase 1">
    <location>
        <begin position="1"/>
        <end position="274"/>
    </location>
</feature>
<feature type="domain" description="GP-PDE">
    <location>
        <begin position="12"/>
        <end position="264"/>
    </location>
</feature>
<feature type="active site" description="Proton acceptor" evidence="2">
    <location>
        <position position="17"/>
    </location>
</feature>
<feature type="active site" description="Proton donor" evidence="2">
    <location>
        <position position="59"/>
    </location>
</feature>
<feature type="binding site" evidence="1">
    <location>
        <position position="44"/>
    </location>
    <ligand>
        <name>Ca(2+)</name>
        <dbReference type="ChEBI" id="CHEBI:29108"/>
    </ligand>
</feature>
<feature type="binding site" evidence="1">
    <location>
        <position position="46"/>
    </location>
    <ligand>
        <name>Ca(2+)</name>
        <dbReference type="ChEBI" id="CHEBI:29108"/>
    </ligand>
</feature>
<feature type="binding site" evidence="1">
    <location>
        <position position="126"/>
    </location>
    <ligand>
        <name>Ca(2+)</name>
        <dbReference type="ChEBI" id="CHEBI:29108"/>
    </ligand>
</feature>
<comment type="function">
    <text evidence="1">Glycerophosphodiester phosphodiesterase hydrolyzes glycerophosphodiesters into glycerol-3-phosphate (G3P) and the corresponding alcohol.</text>
</comment>
<comment type="catalytic activity">
    <reaction evidence="1">
        <text>a sn-glycero-3-phosphodiester + H2O = an alcohol + sn-glycerol 3-phosphate + H(+)</text>
        <dbReference type="Rhea" id="RHEA:12969"/>
        <dbReference type="ChEBI" id="CHEBI:15377"/>
        <dbReference type="ChEBI" id="CHEBI:15378"/>
        <dbReference type="ChEBI" id="CHEBI:30879"/>
        <dbReference type="ChEBI" id="CHEBI:57597"/>
        <dbReference type="ChEBI" id="CHEBI:83408"/>
        <dbReference type="EC" id="3.1.4.46"/>
    </reaction>
</comment>
<comment type="cofactor">
    <cofactor evidence="1">
        <name>Ca(2+)</name>
        <dbReference type="ChEBI" id="CHEBI:29108"/>
    </cofactor>
    <text evidence="1">Binds 1 Ca(2+) ion per subunit.</text>
</comment>
<comment type="induction">
    <text evidence="3">A possible member of the dormancy regulon. Induced in response to reduced oxygen tension (hypoxia). It is hoped that this regulon will give insight into the latent, or dormant phase of infection.</text>
</comment>
<comment type="miscellaneous">
    <text>Was identified as a high-confidence drug target.</text>
</comment>
<comment type="similarity">
    <text evidence="4">Belongs to the glycerophosphoryl diester phosphodiesterase family.</text>
</comment>
<evidence type="ECO:0000250" key="1">
    <source>
        <dbReference type="UniProtKB" id="P09394"/>
    </source>
</evidence>
<evidence type="ECO:0000250" key="2">
    <source>
        <dbReference type="UniProtKB" id="Q8RB32"/>
    </source>
</evidence>
<evidence type="ECO:0000269" key="3">
    <source>
    </source>
</evidence>
<evidence type="ECO:0000305" key="4"/>
<protein>
    <recommendedName>
        <fullName>Probable glycerophosphodiester phosphodiesterase 1</fullName>
        <shortName>Glycerophosphoryl diester phosphodiesterase 1</shortName>
        <ecNumber evidence="1">3.1.4.46</ecNumber>
    </recommendedName>
</protein>
<dbReference type="EC" id="3.1.4.46" evidence="1"/>
<dbReference type="EMBL" id="AL123456">
    <property type="protein sequence ID" value="CCP46671.1"/>
    <property type="molecule type" value="Genomic_DNA"/>
</dbReference>
<dbReference type="PIR" id="G70653">
    <property type="entry name" value="G70653"/>
</dbReference>
<dbReference type="RefSeq" id="NP_218359.1">
    <property type="nucleotide sequence ID" value="NC_000962.3"/>
</dbReference>
<dbReference type="RefSeq" id="WP_003420924.1">
    <property type="nucleotide sequence ID" value="NZ_NVQJ01000022.1"/>
</dbReference>
<dbReference type="SMR" id="P9WMU3"/>
<dbReference type="FunCoup" id="P9WMU3">
    <property type="interactions" value="3"/>
</dbReference>
<dbReference type="STRING" id="83332.Rv3842c"/>
<dbReference type="PaxDb" id="83332-Rv3842c"/>
<dbReference type="DNASU" id="886177"/>
<dbReference type="GeneID" id="886177"/>
<dbReference type="KEGG" id="mtu:Rv3842c"/>
<dbReference type="KEGG" id="mtv:RVBD_3842c"/>
<dbReference type="TubercuList" id="Rv3842c"/>
<dbReference type="eggNOG" id="COG0584">
    <property type="taxonomic scope" value="Bacteria"/>
</dbReference>
<dbReference type="InParanoid" id="P9WMU3"/>
<dbReference type="OrthoDB" id="9758957at2"/>
<dbReference type="PhylomeDB" id="P9WMU3"/>
<dbReference type="Proteomes" id="UP000001584">
    <property type="component" value="Chromosome"/>
</dbReference>
<dbReference type="GO" id="GO:0008889">
    <property type="term" value="F:glycerophosphodiester phosphodiesterase activity"/>
    <property type="evidence" value="ECO:0007669"/>
    <property type="project" value="UniProtKB-EC"/>
</dbReference>
<dbReference type="GO" id="GO:0046872">
    <property type="term" value="F:metal ion binding"/>
    <property type="evidence" value="ECO:0007669"/>
    <property type="project" value="UniProtKB-KW"/>
</dbReference>
<dbReference type="GO" id="GO:0006071">
    <property type="term" value="P:glycerol metabolic process"/>
    <property type="evidence" value="ECO:0007669"/>
    <property type="project" value="UniProtKB-KW"/>
</dbReference>
<dbReference type="GO" id="GO:0006629">
    <property type="term" value="P:lipid metabolic process"/>
    <property type="evidence" value="ECO:0007669"/>
    <property type="project" value="InterPro"/>
</dbReference>
<dbReference type="CDD" id="cd08582">
    <property type="entry name" value="GDPD_like_2"/>
    <property type="match status" value="1"/>
</dbReference>
<dbReference type="Gene3D" id="3.20.20.190">
    <property type="entry name" value="Phosphatidylinositol (PI) phosphodiesterase"/>
    <property type="match status" value="1"/>
</dbReference>
<dbReference type="InterPro" id="IPR030395">
    <property type="entry name" value="GP_PDE_dom"/>
</dbReference>
<dbReference type="InterPro" id="IPR017946">
    <property type="entry name" value="PLC-like_Pdiesterase_TIM-brl"/>
</dbReference>
<dbReference type="PANTHER" id="PTHR46211:SF13">
    <property type="entry name" value="GLYCEROPHOSPHODIESTER PHOSPHODIESTERASE 1-RELATED"/>
    <property type="match status" value="1"/>
</dbReference>
<dbReference type="PANTHER" id="PTHR46211">
    <property type="entry name" value="GLYCEROPHOSPHORYL DIESTER PHOSPHODIESTERASE"/>
    <property type="match status" value="1"/>
</dbReference>
<dbReference type="Pfam" id="PF03009">
    <property type="entry name" value="GDPD"/>
    <property type="match status" value="1"/>
</dbReference>
<dbReference type="SUPFAM" id="SSF51695">
    <property type="entry name" value="PLC-like phosphodiesterases"/>
    <property type="match status" value="1"/>
</dbReference>
<dbReference type="PROSITE" id="PS51704">
    <property type="entry name" value="GP_PDE"/>
    <property type="match status" value="1"/>
</dbReference>
<sequence length="274" mass="29917">MTWADEVLAGHPFVVAHRGASAARPEHTLAAYDLALKEGADGVECDVRLTRDGHLVCVHDRRLDRTSTGAGLVSTMTLAQLRELEYGAWHDSWRPDGSHGDTSLLTLDALVSLVLDWHRPVKIFVETKHPVRYGSLVENKLLALLHRFGIAAPASADRSRAVVMSFSAAAVWRIRRAAPLLPTVLLGKTPRYLTSSAATAVGATAVGPSLPALKEYPQLVDRSAAQGRAVYCWNVDEYEDIDFCREVGVAWIGTHHPGRTKAWLEDGRANGTTR</sequence>
<gene>
    <name type="primary">glpQ1</name>
    <name type="ordered locus">Rv3842c</name>
</gene>
<organism>
    <name type="scientific">Mycobacterium tuberculosis (strain ATCC 25618 / H37Rv)</name>
    <dbReference type="NCBI Taxonomy" id="83332"/>
    <lineage>
        <taxon>Bacteria</taxon>
        <taxon>Bacillati</taxon>
        <taxon>Actinomycetota</taxon>
        <taxon>Actinomycetes</taxon>
        <taxon>Mycobacteriales</taxon>
        <taxon>Mycobacteriaceae</taxon>
        <taxon>Mycobacterium</taxon>
        <taxon>Mycobacterium tuberculosis complex</taxon>
    </lineage>
</organism>